<evidence type="ECO:0000250" key="1"/>
<evidence type="ECO:0000255" key="2">
    <source>
        <dbReference type="PROSITE-ProRule" id="PRU00031"/>
    </source>
</evidence>
<evidence type="ECO:0000305" key="3"/>
<reference key="1">
    <citation type="submission" date="2006-01" db="EMBL/GenBank/DDBJ databases">
        <title>A survey of Daboia russelii venom gland transcripts (cDNA): unraveling the venom proteins and peptides.</title>
        <authorList>
            <person name="Madhukumar A.V."/>
            <person name="Reza M.A."/>
            <person name="Gowda T.V."/>
            <person name="Kini R.M."/>
        </authorList>
    </citation>
    <scope>NUCLEOTIDE SEQUENCE [MRNA]</scope>
    <source>
        <tissue>Venom gland</tissue>
    </source>
</reference>
<proteinExistence type="evidence at transcript level"/>
<organism>
    <name type="scientific">Daboia russelii</name>
    <name type="common">Russel's viper</name>
    <name type="synonym">Vipera russelii</name>
    <dbReference type="NCBI Taxonomy" id="8707"/>
    <lineage>
        <taxon>Eukaryota</taxon>
        <taxon>Metazoa</taxon>
        <taxon>Chordata</taxon>
        <taxon>Craniata</taxon>
        <taxon>Vertebrata</taxon>
        <taxon>Euteleostomi</taxon>
        <taxon>Lepidosauria</taxon>
        <taxon>Squamata</taxon>
        <taxon>Bifurcata</taxon>
        <taxon>Unidentata</taxon>
        <taxon>Episquamata</taxon>
        <taxon>Toxicofera</taxon>
        <taxon>Serpentes</taxon>
        <taxon>Colubroidea</taxon>
        <taxon>Viperidae</taxon>
        <taxon>Viperinae</taxon>
        <taxon>Daboia</taxon>
    </lineage>
</organism>
<name>VKT4_DABRR</name>
<accession>Q2ES47</accession>
<dbReference type="EMBL" id="DQ365981">
    <property type="protein sequence ID" value="ABD24043.1"/>
    <property type="molecule type" value="mRNA"/>
</dbReference>
<dbReference type="SMR" id="Q2ES47"/>
<dbReference type="MEROPS" id="I02.062"/>
<dbReference type="GO" id="GO:0005615">
    <property type="term" value="C:extracellular space"/>
    <property type="evidence" value="ECO:0007669"/>
    <property type="project" value="TreeGrafter"/>
</dbReference>
<dbReference type="GO" id="GO:0004867">
    <property type="term" value="F:serine-type endopeptidase inhibitor activity"/>
    <property type="evidence" value="ECO:0007669"/>
    <property type="project" value="UniProtKB-KW"/>
</dbReference>
<dbReference type="CDD" id="cd22608">
    <property type="entry name" value="Kunitz_PPTI-like"/>
    <property type="match status" value="1"/>
</dbReference>
<dbReference type="FunFam" id="4.10.410.10:FF:000021">
    <property type="entry name" value="Serine protease inhibitor, putative"/>
    <property type="match status" value="1"/>
</dbReference>
<dbReference type="Gene3D" id="4.10.410.10">
    <property type="entry name" value="Pancreatic trypsin inhibitor Kunitz domain"/>
    <property type="match status" value="1"/>
</dbReference>
<dbReference type="InterPro" id="IPR002223">
    <property type="entry name" value="Kunitz_BPTI"/>
</dbReference>
<dbReference type="InterPro" id="IPR036880">
    <property type="entry name" value="Kunitz_BPTI_sf"/>
</dbReference>
<dbReference type="InterPro" id="IPR020901">
    <property type="entry name" value="Prtase_inh_Kunz-CS"/>
</dbReference>
<dbReference type="InterPro" id="IPR050098">
    <property type="entry name" value="TFPI/VKTCI-like"/>
</dbReference>
<dbReference type="PANTHER" id="PTHR10083:SF374">
    <property type="entry name" value="BPTI_KUNITZ INHIBITOR DOMAIN-CONTAINING PROTEIN"/>
    <property type="match status" value="1"/>
</dbReference>
<dbReference type="PANTHER" id="PTHR10083">
    <property type="entry name" value="KUNITZ-TYPE PROTEASE INHIBITOR-RELATED"/>
    <property type="match status" value="1"/>
</dbReference>
<dbReference type="Pfam" id="PF00014">
    <property type="entry name" value="Kunitz_BPTI"/>
    <property type="match status" value="1"/>
</dbReference>
<dbReference type="PRINTS" id="PR00759">
    <property type="entry name" value="BASICPTASE"/>
</dbReference>
<dbReference type="SMART" id="SM00131">
    <property type="entry name" value="KU"/>
    <property type="match status" value="1"/>
</dbReference>
<dbReference type="SUPFAM" id="SSF57362">
    <property type="entry name" value="BPTI-like"/>
    <property type="match status" value="1"/>
</dbReference>
<dbReference type="PROSITE" id="PS00280">
    <property type="entry name" value="BPTI_KUNITZ_1"/>
    <property type="match status" value="1"/>
</dbReference>
<dbReference type="PROSITE" id="PS50279">
    <property type="entry name" value="BPTI_KUNITZ_2"/>
    <property type="match status" value="1"/>
</dbReference>
<protein>
    <recommendedName>
        <fullName>Kunitz-type serine protease inhibitor 4</fullName>
    </recommendedName>
    <alternativeName>
        <fullName>Kunitz protease inhibitor 4</fullName>
    </alternativeName>
    <alternativeName>
        <fullName>Kunitz protease inhibitor IV</fullName>
    </alternativeName>
</protein>
<comment type="function">
    <text evidence="1">Serine protease inhibitor.</text>
</comment>
<comment type="subcellular location">
    <subcellularLocation>
        <location evidence="1">Secreted</location>
    </subcellularLocation>
</comment>
<comment type="tissue specificity">
    <text>Expressed by the venom gland.</text>
</comment>
<comment type="similarity">
    <text evidence="3">Belongs to the venom Kunitz-type family.</text>
</comment>
<sequence>MSSGGLLLLLGLLTLWAELTPISGQDRPKFCHLPVDSGICRAHIPRFYYNPASNQCQGFIYGGCGGNANNFETRDQCRHTCGGK</sequence>
<keyword id="KW-1015">Disulfide bond</keyword>
<keyword id="KW-0646">Protease inhibitor</keyword>
<keyword id="KW-0873">Pyrrolidone carboxylic acid</keyword>
<keyword id="KW-0964">Secreted</keyword>
<keyword id="KW-0722">Serine protease inhibitor</keyword>
<keyword id="KW-0732">Signal</keyword>
<feature type="signal peptide" evidence="1">
    <location>
        <begin position="1"/>
        <end position="24"/>
    </location>
</feature>
<feature type="chain" id="PRO_0000377465" description="Kunitz-type serine protease inhibitor 4">
    <location>
        <begin position="25"/>
        <end position="84"/>
    </location>
</feature>
<feature type="domain" description="BPTI/Kunitz inhibitor" evidence="2">
    <location>
        <begin position="31"/>
        <end position="81"/>
    </location>
</feature>
<feature type="site" description="Reactive bond for trypsin" evidence="1">
    <location>
        <begin position="41"/>
        <end position="42"/>
    </location>
</feature>
<feature type="modified residue" description="Pyrrolidone carboxylic acid" evidence="1">
    <location>
        <position position="25"/>
    </location>
</feature>
<feature type="disulfide bond" evidence="2">
    <location>
        <begin position="31"/>
        <end position="81"/>
    </location>
</feature>
<feature type="disulfide bond" evidence="2">
    <location>
        <begin position="40"/>
        <end position="64"/>
    </location>
</feature>
<feature type="disulfide bond" evidence="2">
    <location>
        <begin position="56"/>
        <end position="77"/>
    </location>
</feature>